<evidence type="ECO:0000255" key="1">
    <source>
        <dbReference type="HAMAP-Rule" id="MF_00215"/>
    </source>
</evidence>
<proteinExistence type="inferred from homology"/>
<reference key="1">
    <citation type="journal article" date="2007" name="J. Bacteriol.">
        <title>Genome sequence of Avery's virulent serotype 2 strain D39 of Streptococcus pneumoniae and comparison with that of unencapsulated laboratory strain R6.</title>
        <authorList>
            <person name="Lanie J.A."/>
            <person name="Ng W.-L."/>
            <person name="Kazmierczak K.M."/>
            <person name="Andrzejewski T.M."/>
            <person name="Davidsen T.M."/>
            <person name="Wayne K.J."/>
            <person name="Tettelin H."/>
            <person name="Glass J.I."/>
            <person name="Winkler M.E."/>
        </authorList>
    </citation>
    <scope>NUCLEOTIDE SEQUENCE [LARGE SCALE GENOMIC DNA]</scope>
    <source>
        <strain>D39 / NCTC 7466</strain>
    </source>
</reference>
<organism>
    <name type="scientific">Streptococcus pneumoniae serotype 2 (strain D39 / NCTC 7466)</name>
    <dbReference type="NCBI Taxonomy" id="373153"/>
    <lineage>
        <taxon>Bacteria</taxon>
        <taxon>Bacillati</taxon>
        <taxon>Bacillota</taxon>
        <taxon>Bacilli</taxon>
        <taxon>Lactobacillales</taxon>
        <taxon>Streptococcaceae</taxon>
        <taxon>Streptococcus</taxon>
    </lineage>
</organism>
<accession>Q04L73</accession>
<keyword id="KW-0067">ATP-binding</keyword>
<keyword id="KW-0173">Coenzyme A biosynthesis</keyword>
<keyword id="KW-0963">Cytoplasm</keyword>
<keyword id="KW-0418">Kinase</keyword>
<keyword id="KW-0547">Nucleotide-binding</keyword>
<keyword id="KW-1185">Reference proteome</keyword>
<keyword id="KW-0808">Transferase</keyword>
<sequence length="306" mass="35528">MTNEFLHFEKISRQTWQSLHRKTTPPLTEEELESIKSFNDQISLQDVTDIYLPLAHLIQIYKRTKEDLAFSKGIFLQRESKSQPFIIGVSGSVAVGKSTTSRLLQILLSRTFTDATVELVTTDGFLYPNQTLIEQGILNRKGFPESYDMEALLNFLDRIKNGQDVDIPVYSHEVYDIVPEEKQSVKAADFVIVEGINVFQNPQNDRLYITDFFDFSIYVDAGVDDIESWYLDRFLKMLSLAQNDPDSYYYRFTQMPIGEVEAFAHQVWTSINLTNLQNYIEPTRNRAEVILHKSKNHEIDEIYLKK</sequence>
<gene>
    <name evidence="1" type="primary">coaA</name>
    <name type="ordered locus">SPD_0733</name>
</gene>
<protein>
    <recommendedName>
        <fullName evidence="1">Pantothenate kinase</fullName>
        <ecNumber evidence="1">2.7.1.33</ecNumber>
    </recommendedName>
    <alternativeName>
        <fullName evidence="1">Pantothenic acid kinase</fullName>
    </alternativeName>
</protein>
<name>COAA_STRP2</name>
<comment type="catalytic activity">
    <reaction evidence="1">
        <text>(R)-pantothenate + ATP = (R)-4'-phosphopantothenate + ADP + H(+)</text>
        <dbReference type="Rhea" id="RHEA:16373"/>
        <dbReference type="ChEBI" id="CHEBI:10986"/>
        <dbReference type="ChEBI" id="CHEBI:15378"/>
        <dbReference type="ChEBI" id="CHEBI:29032"/>
        <dbReference type="ChEBI" id="CHEBI:30616"/>
        <dbReference type="ChEBI" id="CHEBI:456216"/>
        <dbReference type="EC" id="2.7.1.33"/>
    </reaction>
</comment>
<comment type="pathway">
    <text evidence="1">Cofactor biosynthesis; coenzyme A biosynthesis; CoA from (R)-pantothenate: step 1/5.</text>
</comment>
<comment type="subcellular location">
    <subcellularLocation>
        <location evidence="1">Cytoplasm</location>
    </subcellularLocation>
</comment>
<comment type="similarity">
    <text evidence="1">Belongs to the prokaryotic pantothenate kinase family.</text>
</comment>
<feature type="chain" id="PRO_1000043263" description="Pantothenate kinase">
    <location>
        <begin position="1"/>
        <end position="306"/>
    </location>
</feature>
<feature type="binding site" evidence="1">
    <location>
        <begin position="91"/>
        <end position="98"/>
    </location>
    <ligand>
        <name>ATP</name>
        <dbReference type="ChEBI" id="CHEBI:30616"/>
    </ligand>
</feature>
<dbReference type="EC" id="2.7.1.33" evidence="1"/>
<dbReference type="EMBL" id="CP000410">
    <property type="protein sequence ID" value="ABJ54070.1"/>
    <property type="molecule type" value="Genomic_DNA"/>
</dbReference>
<dbReference type="RefSeq" id="WP_000180485.1">
    <property type="nucleotide sequence ID" value="NZ_JAMLJR010000018.1"/>
</dbReference>
<dbReference type="SMR" id="Q04L73"/>
<dbReference type="PaxDb" id="373153-SPD_0733"/>
<dbReference type="GeneID" id="45653803"/>
<dbReference type="KEGG" id="spd:SPD_0733"/>
<dbReference type="eggNOG" id="COG1072">
    <property type="taxonomic scope" value="Bacteria"/>
</dbReference>
<dbReference type="HOGENOM" id="CLU_053818_1_1_9"/>
<dbReference type="BioCyc" id="SPNE373153:G1G6V-806-MONOMER"/>
<dbReference type="UniPathway" id="UPA00241">
    <property type="reaction ID" value="UER00352"/>
</dbReference>
<dbReference type="Proteomes" id="UP000001452">
    <property type="component" value="Chromosome"/>
</dbReference>
<dbReference type="GO" id="GO:0005737">
    <property type="term" value="C:cytoplasm"/>
    <property type="evidence" value="ECO:0007669"/>
    <property type="project" value="UniProtKB-SubCell"/>
</dbReference>
<dbReference type="GO" id="GO:0005524">
    <property type="term" value="F:ATP binding"/>
    <property type="evidence" value="ECO:0007669"/>
    <property type="project" value="UniProtKB-UniRule"/>
</dbReference>
<dbReference type="GO" id="GO:0004594">
    <property type="term" value="F:pantothenate kinase activity"/>
    <property type="evidence" value="ECO:0007669"/>
    <property type="project" value="UniProtKB-UniRule"/>
</dbReference>
<dbReference type="GO" id="GO:0015937">
    <property type="term" value="P:coenzyme A biosynthetic process"/>
    <property type="evidence" value="ECO:0007669"/>
    <property type="project" value="UniProtKB-UniRule"/>
</dbReference>
<dbReference type="CDD" id="cd02025">
    <property type="entry name" value="PanK"/>
    <property type="match status" value="1"/>
</dbReference>
<dbReference type="FunFam" id="3.40.50.300:FF:001646">
    <property type="entry name" value="Pantothenate kinase"/>
    <property type="match status" value="1"/>
</dbReference>
<dbReference type="Gene3D" id="3.40.50.300">
    <property type="entry name" value="P-loop containing nucleotide triphosphate hydrolases"/>
    <property type="match status" value="1"/>
</dbReference>
<dbReference type="HAMAP" id="MF_00215">
    <property type="entry name" value="Pantothen_kinase_1"/>
    <property type="match status" value="1"/>
</dbReference>
<dbReference type="InterPro" id="IPR027417">
    <property type="entry name" value="P-loop_NTPase"/>
</dbReference>
<dbReference type="InterPro" id="IPR004566">
    <property type="entry name" value="PanK"/>
</dbReference>
<dbReference type="InterPro" id="IPR006083">
    <property type="entry name" value="PRK/URK"/>
</dbReference>
<dbReference type="NCBIfam" id="TIGR00554">
    <property type="entry name" value="panK_bact"/>
    <property type="match status" value="1"/>
</dbReference>
<dbReference type="PANTHER" id="PTHR10285">
    <property type="entry name" value="URIDINE KINASE"/>
    <property type="match status" value="1"/>
</dbReference>
<dbReference type="Pfam" id="PF00485">
    <property type="entry name" value="PRK"/>
    <property type="match status" value="1"/>
</dbReference>
<dbReference type="PIRSF" id="PIRSF000545">
    <property type="entry name" value="Pantothenate_kin"/>
    <property type="match status" value="1"/>
</dbReference>
<dbReference type="SUPFAM" id="SSF52540">
    <property type="entry name" value="P-loop containing nucleoside triphosphate hydrolases"/>
    <property type="match status" value="1"/>
</dbReference>